<gene>
    <name type="ordered locus">Rv3189</name>
</gene>
<name>Y3189_MYCTU</name>
<sequence>MKLADAIATAPRRTLKGTYWHQGPTRHPVTSCADPARGPGRYHRTGEPGVWYASNKEQGAWAELFRHFVDDGVDPFEVRRRVGRVAVTLQVLDLTDERTRSHLGVDETDLLSDDYTTTQAIAAARDANFDAVLAPAAALPGCQTLAVFVHALPNIEPERSEVRQPPPRLANLLPLIRPHEHMPDSVRRLLATLTRAGAEAIRRRRR</sequence>
<dbReference type="EC" id="2.4.2.-" evidence="1"/>
<dbReference type="EMBL" id="AL123456">
    <property type="protein sequence ID" value="CCP46000.1"/>
    <property type="molecule type" value="Genomic_DNA"/>
</dbReference>
<dbReference type="RefSeq" id="NP_217705.1">
    <property type="nucleotide sequence ID" value="NC_000962.3"/>
</dbReference>
<dbReference type="RefSeq" id="WP_003899957.1">
    <property type="nucleotide sequence ID" value="NZ_NVQJ01000003.1"/>
</dbReference>
<dbReference type="SMR" id="O53335"/>
<dbReference type="STRING" id="83332.Rv3189"/>
<dbReference type="PaxDb" id="83332-Rv3189"/>
<dbReference type="DNASU" id="888034"/>
<dbReference type="GeneID" id="888034"/>
<dbReference type="KEGG" id="mtu:Rv3189"/>
<dbReference type="KEGG" id="mtv:RVBD_3189"/>
<dbReference type="PATRIC" id="fig|83332.111.peg.3553"/>
<dbReference type="TubercuList" id="Rv3189"/>
<dbReference type="InParanoid" id="O53335"/>
<dbReference type="OrthoDB" id="4716832at2"/>
<dbReference type="Proteomes" id="UP000001584">
    <property type="component" value="Chromosome"/>
</dbReference>
<dbReference type="GO" id="GO:0016779">
    <property type="term" value="F:nucleotidyltransferase activity"/>
    <property type="evidence" value="ECO:0007669"/>
    <property type="project" value="UniProtKB-KW"/>
</dbReference>
<dbReference type="InterPro" id="IPR014914">
    <property type="entry name" value="RES_dom"/>
</dbReference>
<dbReference type="Pfam" id="PF08808">
    <property type="entry name" value="RES"/>
    <property type="match status" value="1"/>
</dbReference>
<dbReference type="SMART" id="SM00953">
    <property type="entry name" value="RES"/>
    <property type="match status" value="1"/>
</dbReference>
<proteinExistence type="evidence at protein level"/>
<protein>
    <recommendedName>
        <fullName evidence="1">Probable NAD(+) phosphorylase Rv3189</fullName>
        <ecNumber evidence="1">2.4.2.-</ecNumber>
    </recommendedName>
    <alternativeName>
        <fullName evidence="1">Mycobacterial cidal toxin Rv3189</fullName>
    </alternativeName>
</protein>
<organism>
    <name type="scientific">Mycobacterium tuberculosis (strain ATCC 25618 / H37Rv)</name>
    <dbReference type="NCBI Taxonomy" id="83332"/>
    <lineage>
        <taxon>Bacteria</taxon>
        <taxon>Bacillati</taxon>
        <taxon>Actinomycetota</taxon>
        <taxon>Actinomycetes</taxon>
        <taxon>Mycobacteriales</taxon>
        <taxon>Mycobacteriaceae</taxon>
        <taxon>Mycobacterium</taxon>
        <taxon>Mycobacterium tuberculosis complex</taxon>
    </lineage>
</organism>
<comment type="function">
    <text evidence="1 3">Probable toxic component of a type II toxin-antitoxin (TA) system. Degrades NAD(+) by phosphorolysis. Neutralized by its cognate antitoxin Rv3188.</text>
</comment>
<comment type="catalytic activity">
    <reaction evidence="1">
        <text>phosphate + NAD(+) = ADP-alpha-D-ribose 1''-phosphate + nicotinamide + H(+)</text>
        <dbReference type="Rhea" id="RHEA:20788"/>
        <dbReference type="ChEBI" id="CHEBI:15378"/>
        <dbReference type="ChEBI" id="CHEBI:17154"/>
        <dbReference type="ChEBI" id="CHEBI:43474"/>
        <dbReference type="ChEBI" id="CHEBI:57540"/>
        <dbReference type="ChEBI" id="CHEBI:58753"/>
    </reaction>
</comment>
<comment type="subunit">
    <text evidence="1">Forms a heterotetramer with cognate antitoxin Rv3188.</text>
</comment>
<comment type="similarity">
    <text evidence="2">Belongs to the MbcT/ParT/Res family.</text>
</comment>
<evidence type="ECO:0000250" key="1">
    <source>
        <dbReference type="UniProtKB" id="P9WLP9"/>
    </source>
</evidence>
<evidence type="ECO:0000305" key="2"/>
<evidence type="ECO:0000305" key="3">
    <source>
    </source>
</evidence>
<evidence type="ECO:0007744" key="4">
    <source>
    </source>
</evidence>
<keyword id="KW-0520">NAD</keyword>
<keyword id="KW-0548">Nucleotidyltransferase</keyword>
<keyword id="KW-1185">Reference proteome</keyword>
<keyword id="KW-1277">Toxin-antitoxin system</keyword>
<keyword id="KW-0808">Transferase</keyword>
<feature type="chain" id="PRO_0000448609" description="Probable NAD(+) phosphorylase Rv3189">
    <location>
        <begin position="1"/>
        <end position="206"/>
    </location>
</feature>
<reference key="1">
    <citation type="journal article" date="1998" name="Nature">
        <title>Deciphering the biology of Mycobacterium tuberculosis from the complete genome sequence.</title>
        <authorList>
            <person name="Cole S.T."/>
            <person name="Brosch R."/>
            <person name="Parkhill J."/>
            <person name="Garnier T."/>
            <person name="Churcher C.M."/>
            <person name="Harris D.E."/>
            <person name="Gordon S.V."/>
            <person name="Eiglmeier K."/>
            <person name="Gas S."/>
            <person name="Barry C.E. III"/>
            <person name="Tekaia F."/>
            <person name="Badcock K."/>
            <person name="Basham D."/>
            <person name="Brown D."/>
            <person name="Chillingworth T."/>
            <person name="Connor R."/>
            <person name="Davies R.M."/>
            <person name="Devlin K."/>
            <person name="Feltwell T."/>
            <person name="Gentles S."/>
            <person name="Hamlin N."/>
            <person name="Holroyd S."/>
            <person name="Hornsby T."/>
            <person name="Jagels K."/>
            <person name="Krogh A."/>
            <person name="McLean J."/>
            <person name="Moule S."/>
            <person name="Murphy L.D."/>
            <person name="Oliver S."/>
            <person name="Osborne J."/>
            <person name="Quail M.A."/>
            <person name="Rajandream M.A."/>
            <person name="Rogers J."/>
            <person name="Rutter S."/>
            <person name="Seeger K."/>
            <person name="Skelton S."/>
            <person name="Squares S."/>
            <person name="Squares R."/>
            <person name="Sulston J.E."/>
            <person name="Taylor K."/>
            <person name="Whitehead S."/>
            <person name="Barrell B.G."/>
        </authorList>
    </citation>
    <scope>NUCLEOTIDE SEQUENCE [LARGE SCALE GENOMIC DNA]</scope>
    <source>
        <strain>ATCC 25618 / H37Rv</strain>
    </source>
</reference>
<reference evidence="4" key="2">
    <citation type="journal article" date="2011" name="Mol. Cell. Proteomics">
        <title>Proteogenomic analysis of Mycobacterium tuberculosis by high resolution mass spectrometry.</title>
        <authorList>
            <person name="Kelkar D.S."/>
            <person name="Kumar D."/>
            <person name="Kumar P."/>
            <person name="Balakrishnan L."/>
            <person name="Muthusamy B."/>
            <person name="Yadav A.K."/>
            <person name="Shrivastava P."/>
            <person name="Marimuthu A."/>
            <person name="Anand S."/>
            <person name="Sundaram H."/>
            <person name="Kingsbury R."/>
            <person name="Harsha H.C."/>
            <person name="Nair B."/>
            <person name="Prasad T.S."/>
            <person name="Chauhan D.S."/>
            <person name="Katoch K."/>
            <person name="Katoch V.M."/>
            <person name="Kumar P."/>
            <person name="Chaerkady R."/>
            <person name="Ramachandran S."/>
            <person name="Dash D."/>
            <person name="Pandey A."/>
        </authorList>
    </citation>
    <scope>IDENTIFICATION BY MASS SPECTROMETRY [LARGE SCALE ANALYSIS]</scope>
</reference>
<reference key="3">
    <citation type="journal article" date="2019" name="Proc. Natl. Acad. Sci. U.S.A.">
        <title>ParST is a widespread toxin-antitoxin module that targets nucleotide metabolism.</title>
        <authorList>
            <person name="Piscotta F.J."/>
            <person name="Jeffrey P.D."/>
            <person name="Link A.J."/>
        </authorList>
    </citation>
    <scope>DISCUSSION OF POSSIBLE FUNCTION</scope>
    <source>
        <strain>H37Rv</strain>
    </source>
</reference>
<accession>O53335</accession>
<accession>F2GJP4</accession>
<accession>I6YBF5</accession>
<accession>Q7D5Z1</accession>